<protein>
    <recommendedName>
        <fullName>Chitin synthase A</fullName>
        <ecNumber>2.4.1.16</ecNumber>
    </recommendedName>
    <alternativeName>
        <fullName>Chitin-UDP acetyl-glucosaminyl transferase A</fullName>
    </alternativeName>
    <alternativeName>
        <fullName>Class-I chitin synthase A</fullName>
    </alternativeName>
</protein>
<feature type="chain" id="PRO_0000193679" description="Chitin synthase A">
    <location>
        <begin position="1"/>
        <end position="910"/>
    </location>
</feature>
<feature type="transmembrane region" description="Helical" evidence="1">
    <location>
        <begin position="366"/>
        <end position="386"/>
    </location>
</feature>
<feature type="transmembrane region" description="Helical" evidence="1">
    <location>
        <begin position="448"/>
        <end position="468"/>
    </location>
</feature>
<feature type="transmembrane region" description="Helical" evidence="1">
    <location>
        <begin position="583"/>
        <end position="603"/>
    </location>
</feature>
<feature type="transmembrane region" description="Helical" evidence="1">
    <location>
        <begin position="620"/>
        <end position="640"/>
    </location>
</feature>
<feature type="transmembrane region" description="Helical" evidence="1">
    <location>
        <begin position="655"/>
        <end position="675"/>
    </location>
</feature>
<feature type="transmembrane region" description="Helical" evidence="1">
    <location>
        <begin position="701"/>
        <end position="721"/>
    </location>
</feature>
<feature type="transmembrane region" description="Helical" evidence="1">
    <location>
        <begin position="730"/>
        <end position="750"/>
    </location>
</feature>
<feature type="transmembrane region" description="Helical" evidence="1">
    <location>
        <begin position="828"/>
        <end position="848"/>
    </location>
</feature>
<feature type="transmembrane region" description="Helical" evidence="1">
    <location>
        <begin position="876"/>
        <end position="896"/>
    </location>
</feature>
<feature type="region of interest" description="Disordered" evidence="2">
    <location>
        <begin position="56"/>
        <end position="156"/>
    </location>
</feature>
<feature type="compositionally biased region" description="Basic and acidic residues" evidence="2">
    <location>
        <begin position="57"/>
        <end position="84"/>
    </location>
</feature>
<feature type="compositionally biased region" description="Basic and acidic residues" evidence="2">
    <location>
        <begin position="130"/>
        <end position="148"/>
    </location>
</feature>
<organism>
    <name type="scientific">Ampelomyces quisqualis</name>
    <name type="common">Powdery mildew agent</name>
    <dbReference type="NCBI Taxonomy" id="50730"/>
    <lineage>
        <taxon>Eukaryota</taxon>
        <taxon>Fungi</taxon>
        <taxon>Dikarya</taxon>
        <taxon>Ascomycota</taxon>
        <taxon>Pezizomycotina</taxon>
        <taxon>Dothideomycetes</taxon>
        <taxon>Pleosporomycetidae</taxon>
        <taxon>Pleosporales</taxon>
        <taxon>Pleosporineae</taxon>
        <taxon>Phaeosphaeriaceae</taxon>
        <taxon>Ampelomyces</taxon>
    </lineage>
</organism>
<name>CHSA_AMPQU</name>
<keyword id="KW-1003">Cell membrane</keyword>
<keyword id="KW-0961">Cell wall biogenesis/degradation</keyword>
<keyword id="KW-0328">Glycosyltransferase</keyword>
<keyword id="KW-0472">Membrane</keyword>
<keyword id="KW-0808">Transferase</keyword>
<keyword id="KW-0812">Transmembrane</keyword>
<keyword id="KW-1133">Transmembrane helix</keyword>
<comment type="function">
    <text evidence="3">Polymerizes chitin, a structural polymer of the cell wall and septum, by transferring the sugar moiety of UDP-GlcNAc to the non-reducing end of the growing chitin polymer.</text>
</comment>
<comment type="catalytic activity">
    <reaction>
        <text>[(1-&gt;4)-N-acetyl-beta-D-glucosaminyl](n) + UDP-N-acetyl-alpha-D-glucosamine = [(1-&gt;4)-N-acetyl-beta-D-glucosaminyl](n+1) + UDP + H(+)</text>
        <dbReference type="Rhea" id="RHEA:16637"/>
        <dbReference type="Rhea" id="RHEA-COMP:9593"/>
        <dbReference type="Rhea" id="RHEA-COMP:9595"/>
        <dbReference type="ChEBI" id="CHEBI:15378"/>
        <dbReference type="ChEBI" id="CHEBI:17029"/>
        <dbReference type="ChEBI" id="CHEBI:57705"/>
        <dbReference type="ChEBI" id="CHEBI:58223"/>
        <dbReference type="EC" id="2.4.1.16"/>
    </reaction>
</comment>
<comment type="subcellular location">
    <subcellularLocation>
        <location evidence="3">Cell membrane</location>
        <topology evidence="1">Multi-pass membrane protein</topology>
    </subcellularLocation>
</comment>
<comment type="similarity">
    <text evidence="3">Belongs to the chitin synthase family. Class I subfamily.</text>
</comment>
<dbReference type="EC" id="2.4.1.16"/>
<dbReference type="EMBL" id="X86802">
    <property type="protein sequence ID" value="CAA60497.1"/>
    <property type="molecule type" value="Genomic_DNA"/>
</dbReference>
<dbReference type="PIR" id="JC4609">
    <property type="entry name" value="JC4609"/>
</dbReference>
<dbReference type="SMR" id="Q12564"/>
<dbReference type="CAZy" id="GT2">
    <property type="family name" value="Glycosyltransferase Family 2"/>
</dbReference>
<dbReference type="GO" id="GO:0030428">
    <property type="term" value="C:cell septum"/>
    <property type="evidence" value="ECO:0007669"/>
    <property type="project" value="TreeGrafter"/>
</dbReference>
<dbReference type="GO" id="GO:0005886">
    <property type="term" value="C:plasma membrane"/>
    <property type="evidence" value="ECO:0007669"/>
    <property type="project" value="UniProtKB-SubCell"/>
</dbReference>
<dbReference type="GO" id="GO:0004100">
    <property type="term" value="F:chitin synthase activity"/>
    <property type="evidence" value="ECO:0007669"/>
    <property type="project" value="UniProtKB-EC"/>
</dbReference>
<dbReference type="GO" id="GO:0071555">
    <property type="term" value="P:cell wall organization"/>
    <property type="evidence" value="ECO:0007669"/>
    <property type="project" value="UniProtKB-KW"/>
</dbReference>
<dbReference type="GO" id="GO:0006031">
    <property type="term" value="P:chitin biosynthetic process"/>
    <property type="evidence" value="ECO:0007669"/>
    <property type="project" value="InterPro"/>
</dbReference>
<dbReference type="CDD" id="cd04190">
    <property type="entry name" value="Chitin_synth_C"/>
    <property type="match status" value="1"/>
</dbReference>
<dbReference type="InterPro" id="IPR004835">
    <property type="entry name" value="Chitin_synth"/>
</dbReference>
<dbReference type="InterPro" id="IPR004834">
    <property type="entry name" value="Chitin_synth_fun"/>
</dbReference>
<dbReference type="InterPro" id="IPR013616">
    <property type="entry name" value="Chitin_synth_N"/>
</dbReference>
<dbReference type="InterPro" id="IPR029044">
    <property type="entry name" value="Nucleotide-diphossugar_trans"/>
</dbReference>
<dbReference type="PANTHER" id="PTHR22914">
    <property type="entry name" value="CHITIN SYNTHASE"/>
    <property type="match status" value="1"/>
</dbReference>
<dbReference type="PANTHER" id="PTHR22914:SF9">
    <property type="entry name" value="CHITIN SYNTHASE 1"/>
    <property type="match status" value="1"/>
</dbReference>
<dbReference type="Pfam" id="PF01644">
    <property type="entry name" value="Chitin_synth_1"/>
    <property type="match status" value="1"/>
</dbReference>
<dbReference type="Pfam" id="PF08407">
    <property type="entry name" value="Chitin_synth_1N"/>
    <property type="match status" value="1"/>
</dbReference>
<dbReference type="SUPFAM" id="SSF53448">
    <property type="entry name" value="Nucleotide-diphospho-sugar transferases"/>
    <property type="match status" value="1"/>
</dbReference>
<gene>
    <name type="primary">CHSA</name>
</gene>
<reference key="1">
    <citation type="journal article" date="1996" name="Gene">
        <title>The chsA gene, encoding a class-I chitin synthase from Ampelomyces quisqualis.</title>
        <authorList>
            <person name="Weiss N."/>
            <person name="Sztejnberg A."/>
            <person name="Yarden O."/>
        </authorList>
    </citation>
    <scope>NUCLEOTIDE SEQUENCE [GENOMIC DNA]</scope>
    <source>
        <strain>AQ10</strain>
    </source>
</reference>
<evidence type="ECO:0000255" key="1"/>
<evidence type="ECO:0000256" key="2">
    <source>
        <dbReference type="SAM" id="MobiDB-lite"/>
    </source>
</evidence>
<evidence type="ECO:0000305" key="3"/>
<sequence length="910" mass="103013">MARRQGPSRSPWAPTQRRRLATDCPCSRVYVLAHTAAAVANSEQYSVENIPYAGGNYHDDYDPRPGGRRHDSDYSLDPNAHHDAYYSQPYDPAPHDASPGGAYGTQPDHYWQDDDVGRPMIQGANAYGPDPHDPDRDPHPDDPFHDEPAPTPTPAPIKRWKTVKEVQLFKGNLVLDCPIPPRLLNQVPHAQPPERDEFTHMRYSAATCDPADFDAERFTLRQKLFAKPRHTELFIVITMYNEEDELFARTMTGVIKNIEYMNSRTNSKTWGKDAWKKIVVCVVSDGRAKINPRTRAVLAALGVYQDGIAKQQVNGKDVTAHIYEYTTQMTLDIKKGVVGVKKGNTPVQMLFCLKEKNQKKINSHRWFFQAFGQVLDPNICVLIDAGTKPGKDSVYQLWKAFDLEPMCAGACGEIKAMLVHGKKLLNPLVATQNFEYKMSNILDKPLESAFGFITVLPGAFSAYRYVALQNDKAGQGPLEKYFAGEKMHGANAGIFTANMYLAEDRILCFELVSKRNCHWILQYVKSATGETDVPTTMAEFISQRRRWLNGSFFAAVYALAHSFDIFRSDHSFLRKTMFLVEFVYQTISMLFAWFALGNFFLVFRILTASLQNELGTAGKVLFIVFEWLYIAVLITCFILSLGNRPQGSNKWYMSMVYFWGVIMAYLMFASIFITVRSIQSQIRNNGGFNASDLLKDKIFATLIISLLSTYVMWLVVSIIFLDPWHMFTSFIQYLLMTPTYINILNVYAFCNTHDITWGTKGDDKPEKLPSVTTKADGKADIHAPTDDADLNTQYETELHVFSTKWKEEKKVPSPGEKQEDYYRGFRSGVVLFWMFCNLALTALVLQAGGLELTVSDPDEAQEKQNQASTIYLAVVLYSVAGLAAFRFIGAMWFLVVRMVSATCRFTSPIY</sequence>
<accession>Q12564</accession>
<proteinExistence type="inferred from homology"/>